<feature type="chain" id="PRO_0000271016" description="Vexin">
    <location>
        <begin position="1"/>
        <end position="207"/>
    </location>
</feature>
<feature type="region of interest" description="Disordered" evidence="2">
    <location>
        <begin position="55"/>
        <end position="102"/>
    </location>
</feature>
<feature type="compositionally biased region" description="Basic and acidic residues" evidence="2">
    <location>
        <begin position="58"/>
        <end position="72"/>
    </location>
</feature>
<feature type="splice variant" id="VSP_022265" description="In isoform 2." evidence="3">
    <original>N</original>
    <variation>NILSLLLEFTGITKDPETPWTRAPSAKLPPWGSVGLEARAEEWANRASPARQ</variation>
    <location>
        <position position="42"/>
    </location>
</feature>
<feature type="sequence conflict" description="In Ref. 1; CAH92899." evidence="4" ref="1">
    <original>S</original>
    <variation>G</variation>
    <location>
        <position position="9"/>
    </location>
</feature>
<feature type="sequence conflict" description="In Ref. 1; CAH92899." evidence="4" ref="1">
    <original>K</original>
    <variation>R</variation>
    <location>
        <position position="41"/>
    </location>
</feature>
<feature type="sequence conflict" description="In Ref. 1; CAH92691/CAH92899." evidence="4" ref="1">
    <original>T</original>
    <variation>A</variation>
    <location>
        <position position="51"/>
    </location>
</feature>
<feature type="sequence conflict" description="In Ref. 1; CAH92691." evidence="4" ref="1">
    <original>E</original>
    <variation>K</variation>
    <location>
        <position position="157"/>
    </location>
</feature>
<feature type="sequence conflict" description="In Ref. 1; CAH92132." evidence="4" ref="1">
    <original>V</original>
    <variation>I</variation>
    <location>
        <position position="179"/>
    </location>
</feature>
<name>VEXIN_PONAB</name>
<gene>
    <name evidence="1" type="primary">VXN</name>
</gene>
<accession>Q5R5R7</accession>
<accession>Q5R6C5</accession>
<accession>Q5R7X8</accession>
<protein>
    <recommendedName>
        <fullName evidence="1">Vexin</fullName>
    </recommendedName>
</protein>
<evidence type="ECO:0000250" key="1">
    <source>
        <dbReference type="UniProtKB" id="Q8BG31"/>
    </source>
</evidence>
<evidence type="ECO:0000256" key="2">
    <source>
        <dbReference type="SAM" id="MobiDB-lite"/>
    </source>
</evidence>
<evidence type="ECO:0000303" key="3">
    <source ref="1"/>
</evidence>
<evidence type="ECO:0000305" key="4"/>
<comment type="function">
    <text evidence="1">Required for neurogenesis in the neural plate and retina. Strongly cooperates with neural bHLH factors to promote neurogenesis.</text>
</comment>
<comment type="subcellular location">
    <subcellularLocation>
        <location evidence="1">Cell membrane</location>
    </subcellularLocation>
    <subcellularLocation>
        <location evidence="1">Nucleus</location>
    </subcellularLocation>
    <text evidence="1">Nuclear localization is essential for its function in neurogenesis.</text>
</comment>
<comment type="alternative products">
    <event type="alternative splicing"/>
    <isoform>
        <id>Q5R5R7-1</id>
        <name>1</name>
        <sequence type="displayed"/>
    </isoform>
    <isoform>
        <id>Q5R5R7-2</id>
        <name>2</name>
        <sequence type="described" ref="VSP_022265"/>
    </isoform>
</comment>
<comment type="similarity">
    <text evidence="4">Belongs to the vexin family.</text>
</comment>
<comment type="caution">
    <text evidence="4">It is uncertain whether Met-1 or Met-2 is the initiator.</text>
</comment>
<comment type="sequence caution" evidence="4">
    <conflict type="erroneous initiation">
        <sequence resource="EMBL-CDS" id="CAH92132"/>
    </conflict>
    <text>Truncated N-terminus.</text>
</comment>
<dbReference type="EMBL" id="CR859981">
    <property type="protein sequence ID" value="CAH92132.1"/>
    <property type="status" value="ALT_INIT"/>
    <property type="molecule type" value="mRNA"/>
</dbReference>
<dbReference type="EMBL" id="CR860566">
    <property type="protein sequence ID" value="CAH92691.1"/>
    <property type="molecule type" value="mRNA"/>
</dbReference>
<dbReference type="EMBL" id="CR860789">
    <property type="protein sequence ID" value="CAH92899.1"/>
    <property type="molecule type" value="mRNA"/>
</dbReference>
<dbReference type="RefSeq" id="NP_001126701.1">
    <property type="nucleotide sequence ID" value="NM_001133229.1"/>
</dbReference>
<dbReference type="RefSeq" id="NP_001128851.1">
    <property type="nucleotide sequence ID" value="NM_001135379.1"/>
</dbReference>
<dbReference type="FunCoup" id="Q5R5R7">
    <property type="interactions" value="403"/>
</dbReference>
<dbReference type="Ensembl" id="ENSPPYT00000059219.1">
    <molecule id="Q5R5R7-2"/>
    <property type="protein sequence ID" value="ENSPPYP00000025649.1"/>
    <property type="gene ID" value="ENSPPYG00000018639.3"/>
</dbReference>
<dbReference type="GeneID" id="100189770"/>
<dbReference type="KEGG" id="pon:100189770"/>
<dbReference type="CTD" id="254778"/>
<dbReference type="eggNOG" id="ENOG502S3CJ">
    <property type="taxonomic scope" value="Eukaryota"/>
</dbReference>
<dbReference type="GeneTree" id="ENSGT00390000010499"/>
<dbReference type="InParanoid" id="Q5R5R7"/>
<dbReference type="OMA" id="DRWDTGD"/>
<dbReference type="OrthoDB" id="5340910at2759"/>
<dbReference type="Proteomes" id="UP000001595">
    <property type="component" value="Chromosome 8"/>
</dbReference>
<dbReference type="GO" id="GO:0005634">
    <property type="term" value="C:nucleus"/>
    <property type="evidence" value="ECO:0000250"/>
    <property type="project" value="UniProtKB"/>
</dbReference>
<dbReference type="GO" id="GO:0005886">
    <property type="term" value="C:plasma membrane"/>
    <property type="evidence" value="ECO:0000250"/>
    <property type="project" value="UniProtKB"/>
</dbReference>
<dbReference type="GO" id="GO:0022008">
    <property type="term" value="P:neurogenesis"/>
    <property type="evidence" value="ECO:0000250"/>
    <property type="project" value="UniProtKB"/>
</dbReference>
<dbReference type="GO" id="GO:0030182">
    <property type="term" value="P:neuron differentiation"/>
    <property type="evidence" value="ECO:0000250"/>
    <property type="project" value="UniProtKB"/>
</dbReference>
<dbReference type="InterPro" id="IPR040470">
    <property type="entry name" value="Vexin"/>
</dbReference>
<dbReference type="InterPro" id="IPR027900">
    <property type="entry name" value="Vexin_dom"/>
</dbReference>
<dbReference type="PANTHER" id="PTHR31520">
    <property type="entry name" value="VEXIN"/>
    <property type="match status" value="1"/>
</dbReference>
<dbReference type="PANTHER" id="PTHR31520:SF1">
    <property type="entry name" value="VEXIN"/>
    <property type="match status" value="1"/>
</dbReference>
<dbReference type="Pfam" id="PF15505">
    <property type="entry name" value="Vexin"/>
    <property type="match status" value="1"/>
</dbReference>
<reference key="1">
    <citation type="submission" date="2004-11" db="EMBL/GenBank/DDBJ databases">
        <authorList>
            <consortium name="The German cDNA consortium"/>
        </authorList>
    </citation>
    <scope>NUCLEOTIDE SEQUENCE [LARGE SCALE MRNA] (ISOFORMS 1 AND 2)</scope>
    <source>
        <tissue>Brain cortex</tissue>
    </source>
</reference>
<organism>
    <name type="scientific">Pongo abelii</name>
    <name type="common">Sumatran orangutan</name>
    <name type="synonym">Pongo pygmaeus abelii</name>
    <dbReference type="NCBI Taxonomy" id="9601"/>
    <lineage>
        <taxon>Eukaryota</taxon>
        <taxon>Metazoa</taxon>
        <taxon>Chordata</taxon>
        <taxon>Craniata</taxon>
        <taxon>Vertebrata</taxon>
        <taxon>Euteleostomi</taxon>
        <taxon>Mammalia</taxon>
        <taxon>Eutheria</taxon>
        <taxon>Euarchontoglires</taxon>
        <taxon>Primates</taxon>
        <taxon>Haplorrhini</taxon>
        <taxon>Catarrhini</taxon>
        <taxon>Hominidae</taxon>
        <taxon>Pongo</taxon>
    </lineage>
</organism>
<keyword id="KW-0025">Alternative splicing</keyword>
<keyword id="KW-1003">Cell membrane</keyword>
<keyword id="KW-0472">Membrane</keyword>
<keyword id="KW-0524">Neurogenesis</keyword>
<keyword id="KW-0539">Nucleus</keyword>
<keyword id="KW-1185">Reference proteome</keyword>
<proteinExistence type="evidence at transcript level"/>
<sequence>MMHQIYSCSDENIEVFTTVIPSKVSSPARRRAKSSQHLLTKNVVIESDLYTHQPLELLPHRGDRRDPGDGRRFGRLQTARPPTAHPAKASARPVGISEPKTSNLCGNRAYGKSLIPPVPRISVKTSASASLEATAMGTEKGAVLMRGSRHLKKMTEEYPALPQGAEASLPLTGSASCGVPGILRKMWTRHKKKSEYVGATNSAFEAD</sequence>